<accession>B1XND1</accession>
<name>SYC_PICP2</name>
<protein>
    <recommendedName>
        <fullName evidence="1">Cysteine--tRNA ligase</fullName>
        <ecNumber evidence="1">6.1.1.16</ecNumber>
    </recommendedName>
    <alternativeName>
        <fullName evidence="1">Cysteinyl-tRNA synthetase</fullName>
        <shortName evidence="1">CysRS</shortName>
    </alternativeName>
</protein>
<comment type="catalytic activity">
    <reaction evidence="1">
        <text>tRNA(Cys) + L-cysteine + ATP = L-cysteinyl-tRNA(Cys) + AMP + diphosphate</text>
        <dbReference type="Rhea" id="RHEA:17773"/>
        <dbReference type="Rhea" id="RHEA-COMP:9661"/>
        <dbReference type="Rhea" id="RHEA-COMP:9679"/>
        <dbReference type="ChEBI" id="CHEBI:30616"/>
        <dbReference type="ChEBI" id="CHEBI:33019"/>
        <dbReference type="ChEBI" id="CHEBI:35235"/>
        <dbReference type="ChEBI" id="CHEBI:78442"/>
        <dbReference type="ChEBI" id="CHEBI:78517"/>
        <dbReference type="ChEBI" id="CHEBI:456215"/>
        <dbReference type="EC" id="6.1.1.16"/>
    </reaction>
</comment>
<comment type="cofactor">
    <cofactor evidence="1">
        <name>Zn(2+)</name>
        <dbReference type="ChEBI" id="CHEBI:29105"/>
    </cofactor>
    <text evidence="1">Binds 1 zinc ion per subunit.</text>
</comment>
<comment type="subunit">
    <text evidence="1">Monomer.</text>
</comment>
<comment type="subcellular location">
    <subcellularLocation>
        <location evidence="1">Cytoplasm</location>
    </subcellularLocation>
</comment>
<comment type="similarity">
    <text evidence="1">Belongs to the class-I aminoacyl-tRNA synthetase family.</text>
</comment>
<keyword id="KW-0030">Aminoacyl-tRNA synthetase</keyword>
<keyword id="KW-0067">ATP-binding</keyword>
<keyword id="KW-0963">Cytoplasm</keyword>
<keyword id="KW-0436">Ligase</keyword>
<keyword id="KW-0479">Metal-binding</keyword>
<keyword id="KW-0547">Nucleotide-binding</keyword>
<keyword id="KW-0648">Protein biosynthesis</keyword>
<keyword id="KW-1185">Reference proteome</keyword>
<keyword id="KW-0862">Zinc</keyword>
<feature type="chain" id="PRO_1000090878" description="Cysteine--tRNA ligase">
    <location>
        <begin position="1"/>
        <end position="472"/>
    </location>
</feature>
<feature type="short sequence motif" description="'HIGH' region">
    <location>
        <begin position="31"/>
        <end position="41"/>
    </location>
</feature>
<feature type="short sequence motif" description="'KMSKS' region">
    <location>
        <begin position="271"/>
        <end position="275"/>
    </location>
</feature>
<feature type="binding site" evidence="1">
    <location>
        <position position="29"/>
    </location>
    <ligand>
        <name>Zn(2+)</name>
        <dbReference type="ChEBI" id="CHEBI:29105"/>
    </ligand>
</feature>
<feature type="binding site" evidence="1">
    <location>
        <position position="214"/>
    </location>
    <ligand>
        <name>Zn(2+)</name>
        <dbReference type="ChEBI" id="CHEBI:29105"/>
    </ligand>
</feature>
<feature type="binding site" evidence="1">
    <location>
        <position position="239"/>
    </location>
    <ligand>
        <name>Zn(2+)</name>
        <dbReference type="ChEBI" id="CHEBI:29105"/>
    </ligand>
</feature>
<feature type="binding site" evidence="1">
    <location>
        <position position="243"/>
    </location>
    <ligand>
        <name>Zn(2+)</name>
        <dbReference type="ChEBI" id="CHEBI:29105"/>
    </ligand>
</feature>
<feature type="binding site" evidence="1">
    <location>
        <position position="274"/>
    </location>
    <ligand>
        <name>ATP</name>
        <dbReference type="ChEBI" id="CHEBI:30616"/>
    </ligand>
</feature>
<reference key="1">
    <citation type="submission" date="2008-02" db="EMBL/GenBank/DDBJ databases">
        <title>Complete sequence of Synechococcus sp. PCC 7002.</title>
        <authorList>
            <person name="Li T."/>
            <person name="Zhao J."/>
            <person name="Zhao C."/>
            <person name="Liu Z."/>
            <person name="Zhao F."/>
            <person name="Marquardt J."/>
            <person name="Nomura C.T."/>
            <person name="Persson S."/>
            <person name="Detter J.C."/>
            <person name="Richardson P.M."/>
            <person name="Lanz C."/>
            <person name="Schuster S.C."/>
            <person name="Wang J."/>
            <person name="Li S."/>
            <person name="Huang X."/>
            <person name="Cai T."/>
            <person name="Yu Z."/>
            <person name="Luo J."/>
            <person name="Zhao J."/>
            <person name="Bryant D.A."/>
        </authorList>
    </citation>
    <scope>NUCLEOTIDE SEQUENCE [LARGE SCALE GENOMIC DNA]</scope>
    <source>
        <strain>ATCC 27264 / PCC 7002 / PR-6</strain>
    </source>
</reference>
<proteinExistence type="inferred from homology"/>
<organism>
    <name type="scientific">Picosynechococcus sp. (strain ATCC 27264 / PCC 7002 / PR-6)</name>
    <name type="common">Agmenellum quadruplicatum</name>
    <dbReference type="NCBI Taxonomy" id="32049"/>
    <lineage>
        <taxon>Bacteria</taxon>
        <taxon>Bacillati</taxon>
        <taxon>Cyanobacteriota</taxon>
        <taxon>Cyanophyceae</taxon>
        <taxon>Oscillatoriophycideae</taxon>
        <taxon>Chroococcales</taxon>
        <taxon>Geminocystaceae</taxon>
        <taxon>Picosynechococcus</taxon>
    </lineage>
</organism>
<dbReference type="EC" id="6.1.1.16" evidence="1"/>
<dbReference type="EMBL" id="CP000951">
    <property type="protein sequence ID" value="ACB00841.1"/>
    <property type="molecule type" value="Genomic_DNA"/>
</dbReference>
<dbReference type="RefSeq" id="WP_012308458.1">
    <property type="nucleotide sequence ID" value="NZ_JAHHPU010000019.1"/>
</dbReference>
<dbReference type="SMR" id="B1XND1"/>
<dbReference type="STRING" id="32049.SYNPCC7002_A2873"/>
<dbReference type="KEGG" id="syp:SYNPCC7002_A2873"/>
<dbReference type="eggNOG" id="COG0215">
    <property type="taxonomic scope" value="Bacteria"/>
</dbReference>
<dbReference type="HOGENOM" id="CLU_013528_0_1_3"/>
<dbReference type="Proteomes" id="UP000001688">
    <property type="component" value="Chromosome"/>
</dbReference>
<dbReference type="GO" id="GO:0005829">
    <property type="term" value="C:cytosol"/>
    <property type="evidence" value="ECO:0007669"/>
    <property type="project" value="TreeGrafter"/>
</dbReference>
<dbReference type="GO" id="GO:0005524">
    <property type="term" value="F:ATP binding"/>
    <property type="evidence" value="ECO:0007669"/>
    <property type="project" value="UniProtKB-UniRule"/>
</dbReference>
<dbReference type="GO" id="GO:0004817">
    <property type="term" value="F:cysteine-tRNA ligase activity"/>
    <property type="evidence" value="ECO:0007669"/>
    <property type="project" value="UniProtKB-UniRule"/>
</dbReference>
<dbReference type="GO" id="GO:0008270">
    <property type="term" value="F:zinc ion binding"/>
    <property type="evidence" value="ECO:0007669"/>
    <property type="project" value="UniProtKB-UniRule"/>
</dbReference>
<dbReference type="GO" id="GO:0006423">
    <property type="term" value="P:cysteinyl-tRNA aminoacylation"/>
    <property type="evidence" value="ECO:0007669"/>
    <property type="project" value="UniProtKB-UniRule"/>
</dbReference>
<dbReference type="CDD" id="cd00672">
    <property type="entry name" value="CysRS_core"/>
    <property type="match status" value="1"/>
</dbReference>
<dbReference type="FunFam" id="3.40.50.620:FF:000009">
    <property type="entry name" value="Cysteine--tRNA ligase"/>
    <property type="match status" value="1"/>
</dbReference>
<dbReference type="Gene3D" id="1.20.120.1910">
    <property type="entry name" value="Cysteine-tRNA ligase, C-terminal anti-codon recognition domain"/>
    <property type="match status" value="1"/>
</dbReference>
<dbReference type="Gene3D" id="3.40.50.620">
    <property type="entry name" value="HUPs"/>
    <property type="match status" value="1"/>
</dbReference>
<dbReference type="HAMAP" id="MF_00041">
    <property type="entry name" value="Cys_tRNA_synth"/>
    <property type="match status" value="1"/>
</dbReference>
<dbReference type="InterPro" id="IPR015803">
    <property type="entry name" value="Cys-tRNA-ligase"/>
</dbReference>
<dbReference type="InterPro" id="IPR015273">
    <property type="entry name" value="Cys-tRNA-synt_Ia_DALR"/>
</dbReference>
<dbReference type="InterPro" id="IPR024909">
    <property type="entry name" value="Cys-tRNA/MSH_ligase"/>
</dbReference>
<dbReference type="InterPro" id="IPR056411">
    <property type="entry name" value="CysS_C"/>
</dbReference>
<dbReference type="InterPro" id="IPR014729">
    <property type="entry name" value="Rossmann-like_a/b/a_fold"/>
</dbReference>
<dbReference type="InterPro" id="IPR032678">
    <property type="entry name" value="tRNA-synt_1_cat_dom"/>
</dbReference>
<dbReference type="InterPro" id="IPR009080">
    <property type="entry name" value="tRNAsynth_Ia_anticodon-bd"/>
</dbReference>
<dbReference type="NCBIfam" id="TIGR00435">
    <property type="entry name" value="cysS"/>
    <property type="match status" value="1"/>
</dbReference>
<dbReference type="PANTHER" id="PTHR10890:SF3">
    <property type="entry name" value="CYSTEINE--TRNA LIGASE, CYTOPLASMIC"/>
    <property type="match status" value="1"/>
</dbReference>
<dbReference type="PANTHER" id="PTHR10890">
    <property type="entry name" value="CYSTEINYL-TRNA SYNTHETASE"/>
    <property type="match status" value="1"/>
</dbReference>
<dbReference type="Pfam" id="PF23493">
    <property type="entry name" value="CysS_C"/>
    <property type="match status" value="1"/>
</dbReference>
<dbReference type="Pfam" id="PF09190">
    <property type="entry name" value="DALR_2"/>
    <property type="match status" value="1"/>
</dbReference>
<dbReference type="Pfam" id="PF01406">
    <property type="entry name" value="tRNA-synt_1e"/>
    <property type="match status" value="1"/>
</dbReference>
<dbReference type="PRINTS" id="PR00983">
    <property type="entry name" value="TRNASYNTHCYS"/>
</dbReference>
<dbReference type="SMART" id="SM00840">
    <property type="entry name" value="DALR_2"/>
    <property type="match status" value="1"/>
</dbReference>
<dbReference type="SUPFAM" id="SSF47323">
    <property type="entry name" value="Anticodon-binding domain of a subclass of class I aminoacyl-tRNA synthetases"/>
    <property type="match status" value="1"/>
</dbReference>
<dbReference type="SUPFAM" id="SSF52374">
    <property type="entry name" value="Nucleotidylyl transferase"/>
    <property type="match status" value="1"/>
</dbReference>
<evidence type="ECO:0000255" key="1">
    <source>
        <dbReference type="HAMAP-Rule" id="MF_00041"/>
    </source>
</evidence>
<sequence length="472" mass="53300">MSLSLYNTLHRRSEPFEPLEANLVRMYCCGITVYDYCHLGHARTCLIWDVVRRYLQWSGYEVHYIQNFTDIDDKILNRARAEKSSMGAIAEKFIEAYFEDMEALHIQPADEYPRATHSLDGIQKLIHDLEQRGFAYASQGDVYYAVRKFDGYGKLSGRKLDDMQAGASGRVNEDPDAPKKHDPFDFALWKAAKAGEPAWDSPWGAGRPGWHIECSAMVRDRLGETIDIHVGGSDLIFPHHENEIAQSEAATGQPLAKYWLHNGMVKVEGEKMSKSLGNFITIRELLKKYDPMAVRLFILQAHYTKPLDFTDEALTAATKGWETLNDALLFGAEHLDTNNITADKGILAKFKAIVDNDLNFSGGLAILFELAKELKKEKNILVHEGKLQQNPQILASLWLTLKELADILGFVPETKQQAAGLTDAEIEDLIQQRKDARANKNYAEGDRLRDLLAEKGIVLVDKPGGITEWHRE</sequence>
<gene>
    <name evidence="1" type="primary">cysS</name>
    <name type="ordered locus">SYNPCC7002_A2873</name>
</gene>